<comment type="function">
    <text evidence="1">This protein specifically catalyzes the removal of signal peptides from prolipoproteins.</text>
</comment>
<comment type="catalytic activity">
    <reaction evidence="1">
        <text>Release of signal peptides from bacterial membrane prolipoproteins. Hydrolyzes -Xaa-Yaa-Zaa-|-(S,diacylglyceryl)Cys-, in which Xaa is hydrophobic (preferably Leu), and Yaa (Ala or Ser) and Zaa (Gly or Ala) have small, neutral side chains.</text>
        <dbReference type="EC" id="3.4.23.36"/>
    </reaction>
</comment>
<comment type="pathway">
    <text evidence="1">Protein modification; lipoprotein biosynthesis (signal peptide cleavage).</text>
</comment>
<comment type="subcellular location">
    <subcellularLocation>
        <location evidence="1">Cell membrane</location>
        <topology evidence="1">Multi-pass membrane protein</topology>
    </subcellularLocation>
</comment>
<comment type="similarity">
    <text evidence="1">Belongs to the peptidase A8 family.</text>
</comment>
<keyword id="KW-0064">Aspartyl protease</keyword>
<keyword id="KW-1003">Cell membrane</keyword>
<keyword id="KW-0378">Hydrolase</keyword>
<keyword id="KW-0472">Membrane</keyword>
<keyword id="KW-0645">Protease</keyword>
<keyword id="KW-1185">Reference proteome</keyword>
<keyword id="KW-0812">Transmembrane</keyword>
<keyword id="KW-1133">Transmembrane helix</keyword>
<evidence type="ECO:0000255" key="1">
    <source>
        <dbReference type="HAMAP-Rule" id="MF_00161"/>
    </source>
</evidence>
<protein>
    <recommendedName>
        <fullName evidence="1">Lipoprotein signal peptidase</fullName>
        <ecNumber evidence="1">3.4.23.36</ecNumber>
    </recommendedName>
    <alternativeName>
        <fullName evidence="1">Prolipoprotein signal peptidase</fullName>
    </alternativeName>
    <alternativeName>
        <fullName evidence="1">Signal peptidase II</fullName>
        <shortName evidence="1">SPase II</shortName>
    </alternativeName>
</protein>
<dbReference type="EC" id="3.4.23.36" evidence="1"/>
<dbReference type="EMBL" id="CP000448">
    <property type="protein sequence ID" value="ABI68596.1"/>
    <property type="molecule type" value="Genomic_DNA"/>
</dbReference>
<dbReference type="RefSeq" id="WP_011640698.1">
    <property type="nucleotide sequence ID" value="NC_008346.1"/>
</dbReference>
<dbReference type="SMR" id="Q0AXF8"/>
<dbReference type="STRING" id="335541.Swol_1287"/>
<dbReference type="KEGG" id="swo:Swol_1287"/>
<dbReference type="eggNOG" id="COG0597">
    <property type="taxonomic scope" value="Bacteria"/>
</dbReference>
<dbReference type="HOGENOM" id="CLU_083252_3_1_9"/>
<dbReference type="OrthoDB" id="9810259at2"/>
<dbReference type="UniPathway" id="UPA00665"/>
<dbReference type="Proteomes" id="UP000001968">
    <property type="component" value="Chromosome"/>
</dbReference>
<dbReference type="GO" id="GO:0005886">
    <property type="term" value="C:plasma membrane"/>
    <property type="evidence" value="ECO:0007669"/>
    <property type="project" value="UniProtKB-SubCell"/>
</dbReference>
<dbReference type="GO" id="GO:0004190">
    <property type="term" value="F:aspartic-type endopeptidase activity"/>
    <property type="evidence" value="ECO:0007669"/>
    <property type="project" value="UniProtKB-UniRule"/>
</dbReference>
<dbReference type="GO" id="GO:0006508">
    <property type="term" value="P:proteolysis"/>
    <property type="evidence" value="ECO:0007669"/>
    <property type="project" value="UniProtKB-KW"/>
</dbReference>
<dbReference type="HAMAP" id="MF_00161">
    <property type="entry name" value="LspA"/>
    <property type="match status" value="1"/>
</dbReference>
<dbReference type="InterPro" id="IPR001872">
    <property type="entry name" value="Peptidase_A8"/>
</dbReference>
<dbReference type="NCBIfam" id="TIGR00077">
    <property type="entry name" value="lspA"/>
    <property type="match status" value="1"/>
</dbReference>
<dbReference type="PANTHER" id="PTHR33695">
    <property type="entry name" value="LIPOPROTEIN SIGNAL PEPTIDASE"/>
    <property type="match status" value="1"/>
</dbReference>
<dbReference type="PANTHER" id="PTHR33695:SF1">
    <property type="entry name" value="LIPOPROTEIN SIGNAL PEPTIDASE"/>
    <property type="match status" value="1"/>
</dbReference>
<dbReference type="Pfam" id="PF01252">
    <property type="entry name" value="Peptidase_A8"/>
    <property type="match status" value="1"/>
</dbReference>
<dbReference type="PRINTS" id="PR00781">
    <property type="entry name" value="LIPOSIGPTASE"/>
</dbReference>
<gene>
    <name evidence="1" type="primary">lspA</name>
    <name type="ordered locus">Swol_1287</name>
</gene>
<name>LSPA_SYNWW</name>
<proteinExistence type="inferred from homology"/>
<feature type="chain" id="PRO_1000097284" description="Lipoprotein signal peptidase">
    <location>
        <begin position="1"/>
        <end position="149"/>
    </location>
</feature>
<feature type="transmembrane region" description="Helical" evidence="1">
    <location>
        <begin position="53"/>
        <end position="73"/>
    </location>
</feature>
<feature type="transmembrane region" description="Helical" evidence="1">
    <location>
        <begin position="89"/>
        <end position="109"/>
    </location>
</feature>
<feature type="transmembrane region" description="Helical" evidence="1">
    <location>
        <begin position="119"/>
        <end position="139"/>
    </location>
</feature>
<feature type="active site" evidence="1">
    <location>
        <position position="110"/>
    </location>
</feature>
<feature type="active site" evidence="1">
    <location>
        <position position="124"/>
    </location>
</feature>
<organism>
    <name type="scientific">Syntrophomonas wolfei subsp. wolfei (strain DSM 2245B / Goettingen)</name>
    <dbReference type="NCBI Taxonomy" id="335541"/>
    <lineage>
        <taxon>Bacteria</taxon>
        <taxon>Bacillati</taxon>
        <taxon>Bacillota</taxon>
        <taxon>Clostridia</taxon>
        <taxon>Eubacteriales</taxon>
        <taxon>Syntrophomonadaceae</taxon>
        <taxon>Syntrophomonas</taxon>
    </lineage>
</organism>
<sequence>MRFWGSFLLVVILDRISKAWVLASFLPRESRSLIEGGLYLTYVQNRGAAFGLMPGKSWLFFISALLVIMALVIYNWRSKASPLEALSTGLIAGGALGNLIDRYFYGFVIDFIDLGWWPVFNLADSAIVCGGILLLILVLLDGKREERNA</sequence>
<reference key="1">
    <citation type="journal article" date="2010" name="Environ. Microbiol.">
        <title>The genome of Syntrophomonas wolfei: new insights into syntrophic metabolism and biohydrogen production.</title>
        <authorList>
            <person name="Sieber J.R."/>
            <person name="Sims D.R."/>
            <person name="Han C."/>
            <person name="Kim E."/>
            <person name="Lykidis A."/>
            <person name="Lapidus A.L."/>
            <person name="McDonnald E."/>
            <person name="Rohlin L."/>
            <person name="Culley D.E."/>
            <person name="Gunsalus R."/>
            <person name="McInerney M.J."/>
        </authorList>
    </citation>
    <scope>NUCLEOTIDE SEQUENCE [LARGE SCALE GENOMIC DNA]</scope>
    <source>
        <strain>DSM 2245B / Goettingen</strain>
    </source>
</reference>
<accession>Q0AXF8</accession>